<reference key="1">
    <citation type="submission" date="2007-05" db="EMBL/GenBank/DDBJ databases">
        <title>Complete sequence of chromosome of Staphylococcus aureus subsp. aureus JH9.</title>
        <authorList>
            <consortium name="US DOE Joint Genome Institute"/>
            <person name="Copeland A."/>
            <person name="Lucas S."/>
            <person name="Lapidus A."/>
            <person name="Barry K."/>
            <person name="Detter J.C."/>
            <person name="Glavina del Rio T."/>
            <person name="Hammon N."/>
            <person name="Israni S."/>
            <person name="Pitluck S."/>
            <person name="Chain P."/>
            <person name="Malfatti S."/>
            <person name="Shin M."/>
            <person name="Vergez L."/>
            <person name="Schmutz J."/>
            <person name="Larimer F."/>
            <person name="Land M."/>
            <person name="Hauser L."/>
            <person name="Kyrpides N."/>
            <person name="Kim E."/>
            <person name="Tomasz A."/>
            <person name="Richardson P."/>
        </authorList>
    </citation>
    <scope>NUCLEOTIDE SEQUENCE [LARGE SCALE GENOMIC DNA]</scope>
    <source>
        <strain>JH9</strain>
    </source>
</reference>
<protein>
    <recommendedName>
        <fullName evidence="1">Large ribosomal subunit protein bL12</fullName>
    </recommendedName>
    <alternativeName>
        <fullName evidence="2">50S ribosomal protein L7/L12</fullName>
    </alternativeName>
</protein>
<feature type="chain" id="PRO_1000079815" description="Large ribosomal subunit protein bL12">
    <location>
        <begin position="1"/>
        <end position="122"/>
    </location>
</feature>
<sequence length="122" mass="12712">MANHEQIIEAIKEMSVLELNDLVKAIEEEFGVTAAAPVAVAGAAGGADAAAEKTEFDVELTSAGSSKIKVVKAVKEATGLGLKDAKELVDGAPKVIKEALPKEEAEKLKEQLEEVGATVELK</sequence>
<keyword id="KW-0687">Ribonucleoprotein</keyword>
<keyword id="KW-0689">Ribosomal protein</keyword>
<comment type="function">
    <text evidence="1">Forms part of the ribosomal stalk which helps the ribosome interact with GTP-bound translation factors. Is thus essential for accurate translation.</text>
</comment>
<comment type="subunit">
    <text evidence="1">Homodimer. Part of the ribosomal stalk of the 50S ribosomal subunit. Forms a multimeric L10(L12)X complex, where L10 forms an elongated spine to which 2 to 4 L12 dimers bind in a sequential fashion. Binds GTP-bound translation factors.</text>
</comment>
<comment type="similarity">
    <text evidence="1">Belongs to the bacterial ribosomal protein bL12 family.</text>
</comment>
<gene>
    <name evidence="1" type="primary">rplL</name>
    <name type="ordered locus">SaurJH9_0563</name>
</gene>
<evidence type="ECO:0000255" key="1">
    <source>
        <dbReference type="HAMAP-Rule" id="MF_00368"/>
    </source>
</evidence>
<evidence type="ECO:0000305" key="2"/>
<proteinExistence type="inferred from homology"/>
<accession>A5IQ94</accession>
<organism>
    <name type="scientific">Staphylococcus aureus (strain JH9)</name>
    <dbReference type="NCBI Taxonomy" id="359786"/>
    <lineage>
        <taxon>Bacteria</taxon>
        <taxon>Bacillati</taxon>
        <taxon>Bacillota</taxon>
        <taxon>Bacilli</taxon>
        <taxon>Bacillales</taxon>
        <taxon>Staphylococcaceae</taxon>
        <taxon>Staphylococcus</taxon>
    </lineage>
</organism>
<name>RL7_STAA9</name>
<dbReference type="EMBL" id="CP000703">
    <property type="protein sequence ID" value="ABQ48367.1"/>
    <property type="molecule type" value="Genomic_DNA"/>
</dbReference>
<dbReference type="RefSeq" id="WP_001273586.1">
    <property type="nucleotide sequence ID" value="NC_009487.1"/>
</dbReference>
<dbReference type="SMR" id="A5IQ94"/>
<dbReference type="GeneID" id="98344874"/>
<dbReference type="KEGG" id="saj:SaurJH9_0563"/>
<dbReference type="HOGENOM" id="CLU_086499_3_2_9"/>
<dbReference type="GO" id="GO:0022625">
    <property type="term" value="C:cytosolic large ribosomal subunit"/>
    <property type="evidence" value="ECO:0007669"/>
    <property type="project" value="TreeGrafter"/>
</dbReference>
<dbReference type="GO" id="GO:0003729">
    <property type="term" value="F:mRNA binding"/>
    <property type="evidence" value="ECO:0007669"/>
    <property type="project" value="TreeGrafter"/>
</dbReference>
<dbReference type="GO" id="GO:0003735">
    <property type="term" value="F:structural constituent of ribosome"/>
    <property type="evidence" value="ECO:0007669"/>
    <property type="project" value="InterPro"/>
</dbReference>
<dbReference type="GO" id="GO:0006412">
    <property type="term" value="P:translation"/>
    <property type="evidence" value="ECO:0007669"/>
    <property type="project" value="UniProtKB-UniRule"/>
</dbReference>
<dbReference type="CDD" id="cd00387">
    <property type="entry name" value="Ribosomal_L7_L12"/>
    <property type="match status" value="1"/>
</dbReference>
<dbReference type="FunFam" id="1.20.5.710:FF:000002">
    <property type="entry name" value="50S ribosomal protein L7/L12"/>
    <property type="match status" value="1"/>
</dbReference>
<dbReference type="FunFam" id="3.30.1390.10:FF:000001">
    <property type="entry name" value="50S ribosomal protein L7/L12"/>
    <property type="match status" value="1"/>
</dbReference>
<dbReference type="Gene3D" id="3.30.1390.10">
    <property type="match status" value="1"/>
</dbReference>
<dbReference type="Gene3D" id="1.20.5.710">
    <property type="entry name" value="Single helix bin"/>
    <property type="match status" value="1"/>
</dbReference>
<dbReference type="HAMAP" id="MF_00368">
    <property type="entry name" value="Ribosomal_bL12"/>
    <property type="match status" value="1"/>
</dbReference>
<dbReference type="InterPro" id="IPR000206">
    <property type="entry name" value="Ribosomal_bL12"/>
</dbReference>
<dbReference type="InterPro" id="IPR013823">
    <property type="entry name" value="Ribosomal_bL12_C"/>
</dbReference>
<dbReference type="InterPro" id="IPR014719">
    <property type="entry name" value="Ribosomal_bL12_C/ClpS-like"/>
</dbReference>
<dbReference type="InterPro" id="IPR008932">
    <property type="entry name" value="Ribosomal_bL12_oligo"/>
</dbReference>
<dbReference type="InterPro" id="IPR036235">
    <property type="entry name" value="Ribosomal_bL12_oligo_N_sf"/>
</dbReference>
<dbReference type="NCBIfam" id="TIGR00855">
    <property type="entry name" value="L12"/>
    <property type="match status" value="1"/>
</dbReference>
<dbReference type="PANTHER" id="PTHR45987">
    <property type="entry name" value="39S RIBOSOMAL PROTEIN L12"/>
    <property type="match status" value="1"/>
</dbReference>
<dbReference type="PANTHER" id="PTHR45987:SF4">
    <property type="entry name" value="LARGE RIBOSOMAL SUBUNIT PROTEIN BL12M"/>
    <property type="match status" value="1"/>
</dbReference>
<dbReference type="Pfam" id="PF00542">
    <property type="entry name" value="Ribosomal_L12"/>
    <property type="match status" value="1"/>
</dbReference>
<dbReference type="Pfam" id="PF16320">
    <property type="entry name" value="Ribosomal_L12_N"/>
    <property type="match status" value="1"/>
</dbReference>
<dbReference type="SUPFAM" id="SSF54736">
    <property type="entry name" value="ClpS-like"/>
    <property type="match status" value="1"/>
</dbReference>
<dbReference type="SUPFAM" id="SSF48300">
    <property type="entry name" value="Ribosomal protein L7/12, oligomerisation (N-terminal) domain"/>
    <property type="match status" value="1"/>
</dbReference>